<reference key="1">
    <citation type="journal article" date="2002" name="Proc. Natl. Acad. Sci. U.S.A.">
        <title>Complete genome sequence of Clostridium perfringens, an anaerobic flesh-eater.</title>
        <authorList>
            <person name="Shimizu T."/>
            <person name="Ohtani K."/>
            <person name="Hirakawa H."/>
            <person name="Ohshima K."/>
            <person name="Yamashita A."/>
            <person name="Shiba T."/>
            <person name="Ogasawara N."/>
            <person name="Hattori M."/>
            <person name="Kuhara S."/>
            <person name="Hayashi H."/>
        </authorList>
    </citation>
    <scope>NUCLEOTIDE SEQUENCE [LARGE SCALE GENOMIC DNA]</scope>
    <source>
        <strain>13 / Type A</strain>
    </source>
</reference>
<sequence length="307" mass="34860">MGVTIEKLIKDFSLEVIQIGEENVPINVSDVNRPGLQLAGFYNYFAPERIQVIGKAEWSFLEDMSPDLRKKRLNKFFSFDISCLIITRGLEIHEELLKAARKRNLWILRSDMVTTKFISKITMYLSDKMAPETRLHGVLVDVYGIGMLITGESGIGKSETALELIKRGHRLVTDDAVDIKEIDGDLIGRSPEITFGMLEVRGMGIIDVSALYGLSSILNSKQIKIIIHFEHWKDDGDYDRLGVNDEYQDILGVKVKKLRVPIRPGRNIAVIIEAAAANYRYQRMSDISPVDIIEKRMLESMEKESKI</sequence>
<proteinExistence type="inferred from homology"/>
<gene>
    <name evidence="1" type="primary">hprK</name>
    <name type="ordered locus">CPE1004</name>
</gene>
<organism>
    <name type="scientific">Clostridium perfringens (strain 13 / Type A)</name>
    <dbReference type="NCBI Taxonomy" id="195102"/>
    <lineage>
        <taxon>Bacteria</taxon>
        <taxon>Bacillati</taxon>
        <taxon>Bacillota</taxon>
        <taxon>Clostridia</taxon>
        <taxon>Eubacteriales</taxon>
        <taxon>Clostridiaceae</taxon>
        <taxon>Clostridium</taxon>
    </lineage>
</organism>
<evidence type="ECO:0000255" key="1">
    <source>
        <dbReference type="HAMAP-Rule" id="MF_01249"/>
    </source>
</evidence>
<dbReference type="EC" id="2.7.11.-" evidence="1"/>
<dbReference type="EC" id="2.7.4.-" evidence="1"/>
<dbReference type="EMBL" id="BA000016">
    <property type="protein sequence ID" value="BAB80710.1"/>
    <property type="molecule type" value="Genomic_DNA"/>
</dbReference>
<dbReference type="RefSeq" id="WP_011010165.1">
    <property type="nucleotide sequence ID" value="NC_003366.1"/>
</dbReference>
<dbReference type="SMR" id="Q8XLN7"/>
<dbReference type="STRING" id="195102.gene:10490267"/>
<dbReference type="KEGG" id="cpe:CPE1004"/>
<dbReference type="HOGENOM" id="CLU_052030_0_1_9"/>
<dbReference type="Proteomes" id="UP000000818">
    <property type="component" value="Chromosome"/>
</dbReference>
<dbReference type="GO" id="GO:0005524">
    <property type="term" value="F:ATP binding"/>
    <property type="evidence" value="ECO:0007669"/>
    <property type="project" value="UniProtKB-UniRule"/>
</dbReference>
<dbReference type="GO" id="GO:0000287">
    <property type="term" value="F:magnesium ion binding"/>
    <property type="evidence" value="ECO:0007669"/>
    <property type="project" value="UniProtKB-UniRule"/>
</dbReference>
<dbReference type="GO" id="GO:0000155">
    <property type="term" value="F:phosphorelay sensor kinase activity"/>
    <property type="evidence" value="ECO:0007669"/>
    <property type="project" value="InterPro"/>
</dbReference>
<dbReference type="GO" id="GO:0004674">
    <property type="term" value="F:protein serine/threonine kinase activity"/>
    <property type="evidence" value="ECO:0007669"/>
    <property type="project" value="UniProtKB-KW"/>
</dbReference>
<dbReference type="GO" id="GO:0004712">
    <property type="term" value="F:protein serine/threonine/tyrosine kinase activity"/>
    <property type="evidence" value="ECO:0007669"/>
    <property type="project" value="UniProtKB-UniRule"/>
</dbReference>
<dbReference type="GO" id="GO:0006109">
    <property type="term" value="P:regulation of carbohydrate metabolic process"/>
    <property type="evidence" value="ECO:0007669"/>
    <property type="project" value="UniProtKB-UniRule"/>
</dbReference>
<dbReference type="CDD" id="cd01918">
    <property type="entry name" value="HprK_C"/>
    <property type="match status" value="1"/>
</dbReference>
<dbReference type="FunFam" id="3.40.50.300:FF:000174">
    <property type="entry name" value="HPr kinase/phosphorylase"/>
    <property type="match status" value="1"/>
</dbReference>
<dbReference type="Gene3D" id="3.40.1390.20">
    <property type="entry name" value="HprK N-terminal domain-like"/>
    <property type="match status" value="1"/>
</dbReference>
<dbReference type="Gene3D" id="3.40.50.300">
    <property type="entry name" value="P-loop containing nucleotide triphosphate hydrolases"/>
    <property type="match status" value="1"/>
</dbReference>
<dbReference type="HAMAP" id="MF_01249">
    <property type="entry name" value="HPr_kinase"/>
    <property type="match status" value="1"/>
</dbReference>
<dbReference type="InterPro" id="IPR003755">
    <property type="entry name" value="HPr(Ser)_kin/Pase"/>
</dbReference>
<dbReference type="InterPro" id="IPR011104">
    <property type="entry name" value="Hpr_kin/Pase_C"/>
</dbReference>
<dbReference type="InterPro" id="IPR011126">
    <property type="entry name" value="Hpr_kin/Pase_Hpr_N"/>
</dbReference>
<dbReference type="InterPro" id="IPR027417">
    <property type="entry name" value="P-loop_NTPase"/>
</dbReference>
<dbReference type="InterPro" id="IPR028979">
    <property type="entry name" value="Ser_kin/Pase_Hpr-like_N_sf"/>
</dbReference>
<dbReference type="NCBIfam" id="TIGR00679">
    <property type="entry name" value="hpr-ser"/>
    <property type="match status" value="1"/>
</dbReference>
<dbReference type="PANTHER" id="PTHR30305:SF1">
    <property type="entry name" value="HPR KINASE_PHOSPHORYLASE"/>
    <property type="match status" value="1"/>
</dbReference>
<dbReference type="PANTHER" id="PTHR30305">
    <property type="entry name" value="PROTEIN YJDM-RELATED"/>
    <property type="match status" value="1"/>
</dbReference>
<dbReference type="Pfam" id="PF07475">
    <property type="entry name" value="Hpr_kinase_C"/>
    <property type="match status" value="1"/>
</dbReference>
<dbReference type="Pfam" id="PF02603">
    <property type="entry name" value="Hpr_kinase_N"/>
    <property type="match status" value="1"/>
</dbReference>
<dbReference type="SUPFAM" id="SSF75138">
    <property type="entry name" value="HprK N-terminal domain-like"/>
    <property type="match status" value="1"/>
</dbReference>
<dbReference type="SUPFAM" id="SSF53795">
    <property type="entry name" value="PEP carboxykinase-like"/>
    <property type="match status" value="1"/>
</dbReference>
<keyword id="KW-0067">ATP-binding</keyword>
<keyword id="KW-0119">Carbohydrate metabolism</keyword>
<keyword id="KW-0418">Kinase</keyword>
<keyword id="KW-0460">Magnesium</keyword>
<keyword id="KW-0479">Metal-binding</keyword>
<keyword id="KW-0511">Multifunctional enzyme</keyword>
<keyword id="KW-0547">Nucleotide-binding</keyword>
<keyword id="KW-1185">Reference proteome</keyword>
<keyword id="KW-0723">Serine/threonine-protein kinase</keyword>
<keyword id="KW-0808">Transferase</keyword>
<name>HPRK_CLOPE</name>
<accession>Q8XLN7</accession>
<protein>
    <recommendedName>
        <fullName evidence="1">HPr kinase/phosphorylase</fullName>
        <shortName evidence="1">HPrK/P</shortName>
        <ecNumber evidence="1">2.7.11.-</ecNumber>
        <ecNumber evidence="1">2.7.4.-</ecNumber>
    </recommendedName>
    <alternativeName>
        <fullName evidence="1">HPr(Ser) kinase/phosphorylase</fullName>
    </alternativeName>
</protein>
<comment type="function">
    <text evidence="1">Catalyzes the ATP- as well as the pyrophosphate-dependent phosphorylation of a specific serine residue in HPr, a phosphocarrier protein of the phosphoenolpyruvate-dependent sugar phosphotransferase system (PTS). HprK/P also catalyzes the pyrophosphate-producing, inorganic phosphate-dependent dephosphorylation (phosphorolysis) of seryl-phosphorylated HPr (P-Ser-HPr). The two antagonistic activities of HprK/P are regulated by several intracellular metabolites, which change their concentration in response to the absence or presence of rapidly metabolisable carbon sources (glucose, fructose, etc.) in the growth medium. Therefore, by controlling the phosphorylation state of HPr, HPrK/P is a sensor enzyme that plays a major role in the regulation of carbon metabolism and sugar transport: it mediates carbon catabolite repression (CCR), and regulates PTS-catalyzed carbohydrate uptake and inducer exclusion.</text>
</comment>
<comment type="catalytic activity">
    <reaction evidence="1">
        <text>[HPr protein]-L-serine + ATP = [HPr protein]-O-phospho-L-serine + ADP + H(+)</text>
        <dbReference type="Rhea" id="RHEA:46600"/>
        <dbReference type="Rhea" id="RHEA-COMP:11602"/>
        <dbReference type="Rhea" id="RHEA-COMP:11603"/>
        <dbReference type="ChEBI" id="CHEBI:15378"/>
        <dbReference type="ChEBI" id="CHEBI:29999"/>
        <dbReference type="ChEBI" id="CHEBI:30616"/>
        <dbReference type="ChEBI" id="CHEBI:83421"/>
        <dbReference type="ChEBI" id="CHEBI:456216"/>
    </reaction>
</comment>
<comment type="catalytic activity">
    <reaction evidence="1">
        <text>[HPr protein]-O-phospho-L-serine + phosphate + H(+) = [HPr protein]-L-serine + diphosphate</text>
        <dbReference type="Rhea" id="RHEA:46604"/>
        <dbReference type="Rhea" id="RHEA-COMP:11602"/>
        <dbReference type="Rhea" id="RHEA-COMP:11603"/>
        <dbReference type="ChEBI" id="CHEBI:15378"/>
        <dbReference type="ChEBI" id="CHEBI:29999"/>
        <dbReference type="ChEBI" id="CHEBI:33019"/>
        <dbReference type="ChEBI" id="CHEBI:43474"/>
        <dbReference type="ChEBI" id="CHEBI:83421"/>
    </reaction>
</comment>
<comment type="cofactor">
    <cofactor evidence="1">
        <name>Mg(2+)</name>
        <dbReference type="ChEBI" id="CHEBI:18420"/>
    </cofactor>
</comment>
<comment type="subunit">
    <text evidence="1">Homohexamer.</text>
</comment>
<comment type="domain">
    <text evidence="1">The Walker A ATP-binding motif also binds Pi and PPi.</text>
</comment>
<comment type="miscellaneous">
    <text evidence="1">Both phosphorylation and phosphorolysis are carried out by the same active site and suggest a common mechanism for both reactions.</text>
</comment>
<comment type="similarity">
    <text evidence="1">Belongs to the HPrK/P family.</text>
</comment>
<feature type="chain" id="PRO_0000058953" description="HPr kinase/phosphorylase">
    <location>
        <begin position="1"/>
        <end position="307"/>
    </location>
</feature>
<feature type="region of interest" description="Important for the catalytic mechanism of both phosphorylation and dephosphorylation" evidence="1">
    <location>
        <begin position="198"/>
        <end position="207"/>
    </location>
</feature>
<feature type="region of interest" description="Important for the catalytic mechanism of dephosphorylation" evidence="1">
    <location>
        <begin position="261"/>
        <end position="266"/>
    </location>
</feature>
<feature type="active site" evidence="1">
    <location>
        <position position="136"/>
    </location>
</feature>
<feature type="active site" evidence="1">
    <location>
        <position position="157"/>
    </location>
</feature>
<feature type="active site" description="Proton acceptor; for phosphorylation activity. Proton donor; for dephosphorylation activity" evidence="1">
    <location>
        <position position="175"/>
    </location>
</feature>
<feature type="active site" evidence="1">
    <location>
        <position position="240"/>
    </location>
</feature>
<feature type="binding site" evidence="1">
    <location>
        <begin position="151"/>
        <end position="158"/>
    </location>
    <ligand>
        <name>ATP</name>
        <dbReference type="ChEBI" id="CHEBI:30616"/>
    </ligand>
</feature>
<feature type="binding site" evidence="1">
    <location>
        <position position="158"/>
    </location>
    <ligand>
        <name>Mg(2+)</name>
        <dbReference type="ChEBI" id="CHEBI:18420"/>
    </ligand>
</feature>
<feature type="binding site" evidence="1">
    <location>
        <position position="199"/>
    </location>
    <ligand>
        <name>Mg(2+)</name>
        <dbReference type="ChEBI" id="CHEBI:18420"/>
    </ligand>
</feature>